<reference key="1">
    <citation type="submission" date="2006-06" db="EMBL/GenBank/DDBJ databases">
        <title>Complete sequence of chromosome of Mycobacterium sp. MCS.</title>
        <authorList>
            <consortium name="US DOE Joint Genome Institute"/>
            <person name="Copeland A."/>
            <person name="Lucas S."/>
            <person name="Lapidus A."/>
            <person name="Barry K."/>
            <person name="Detter J.C."/>
            <person name="Glavina del Rio T."/>
            <person name="Hammon N."/>
            <person name="Israni S."/>
            <person name="Dalin E."/>
            <person name="Tice H."/>
            <person name="Pitluck S."/>
            <person name="Martinez M."/>
            <person name="Schmutz J."/>
            <person name="Larimer F."/>
            <person name="Land M."/>
            <person name="Hauser L."/>
            <person name="Kyrpides N."/>
            <person name="Kim E."/>
            <person name="Miller C.D."/>
            <person name="Hughes J.E."/>
            <person name="Anderson A.J."/>
            <person name="Sims R.C."/>
            <person name="Richardson P."/>
        </authorList>
    </citation>
    <scope>NUCLEOTIDE SEQUENCE [LARGE SCALE GENOMIC DNA]</scope>
    <source>
        <strain>MCS</strain>
    </source>
</reference>
<dbReference type="EC" id="2.1.3.2" evidence="1"/>
<dbReference type="EMBL" id="CP000384">
    <property type="protein sequence ID" value="ABG08471.1"/>
    <property type="molecule type" value="Genomic_DNA"/>
</dbReference>
<dbReference type="SMR" id="Q1B9G3"/>
<dbReference type="KEGG" id="mmc:Mmcs_2363"/>
<dbReference type="HOGENOM" id="CLU_043846_2_0_11"/>
<dbReference type="BioCyc" id="MSP164756:G1G6O-2415-MONOMER"/>
<dbReference type="UniPathway" id="UPA00070">
    <property type="reaction ID" value="UER00116"/>
</dbReference>
<dbReference type="GO" id="GO:0005829">
    <property type="term" value="C:cytosol"/>
    <property type="evidence" value="ECO:0007669"/>
    <property type="project" value="TreeGrafter"/>
</dbReference>
<dbReference type="GO" id="GO:0016597">
    <property type="term" value="F:amino acid binding"/>
    <property type="evidence" value="ECO:0007669"/>
    <property type="project" value="InterPro"/>
</dbReference>
<dbReference type="GO" id="GO:0004070">
    <property type="term" value="F:aspartate carbamoyltransferase activity"/>
    <property type="evidence" value="ECO:0007669"/>
    <property type="project" value="UniProtKB-UniRule"/>
</dbReference>
<dbReference type="GO" id="GO:0006207">
    <property type="term" value="P:'de novo' pyrimidine nucleobase biosynthetic process"/>
    <property type="evidence" value="ECO:0007669"/>
    <property type="project" value="InterPro"/>
</dbReference>
<dbReference type="GO" id="GO:0044205">
    <property type="term" value="P:'de novo' UMP biosynthetic process"/>
    <property type="evidence" value="ECO:0007669"/>
    <property type="project" value="UniProtKB-UniRule"/>
</dbReference>
<dbReference type="GO" id="GO:0006520">
    <property type="term" value="P:amino acid metabolic process"/>
    <property type="evidence" value="ECO:0007669"/>
    <property type="project" value="InterPro"/>
</dbReference>
<dbReference type="FunFam" id="3.40.50.1370:FF:000007">
    <property type="entry name" value="Aspartate carbamoyltransferase"/>
    <property type="match status" value="1"/>
</dbReference>
<dbReference type="Gene3D" id="3.40.50.1370">
    <property type="entry name" value="Aspartate/ornithine carbamoyltransferase"/>
    <property type="match status" value="2"/>
</dbReference>
<dbReference type="HAMAP" id="MF_00001">
    <property type="entry name" value="Asp_carb_tr"/>
    <property type="match status" value="1"/>
</dbReference>
<dbReference type="InterPro" id="IPR006132">
    <property type="entry name" value="Asp/Orn_carbamoyltranf_P-bd"/>
</dbReference>
<dbReference type="InterPro" id="IPR006130">
    <property type="entry name" value="Asp/Orn_carbamoylTrfase"/>
</dbReference>
<dbReference type="InterPro" id="IPR036901">
    <property type="entry name" value="Asp/Orn_carbamoylTrfase_sf"/>
</dbReference>
<dbReference type="InterPro" id="IPR002082">
    <property type="entry name" value="Asp_carbamoyltransf"/>
</dbReference>
<dbReference type="InterPro" id="IPR006131">
    <property type="entry name" value="Asp_carbamoyltransf_Asp/Orn-bd"/>
</dbReference>
<dbReference type="NCBIfam" id="TIGR00670">
    <property type="entry name" value="asp_carb_tr"/>
    <property type="match status" value="1"/>
</dbReference>
<dbReference type="NCBIfam" id="NF002032">
    <property type="entry name" value="PRK00856.1"/>
    <property type="match status" value="1"/>
</dbReference>
<dbReference type="PANTHER" id="PTHR45753:SF6">
    <property type="entry name" value="ASPARTATE CARBAMOYLTRANSFERASE"/>
    <property type="match status" value="1"/>
</dbReference>
<dbReference type="PANTHER" id="PTHR45753">
    <property type="entry name" value="ORNITHINE CARBAMOYLTRANSFERASE, MITOCHONDRIAL"/>
    <property type="match status" value="1"/>
</dbReference>
<dbReference type="Pfam" id="PF00185">
    <property type="entry name" value="OTCace"/>
    <property type="match status" value="1"/>
</dbReference>
<dbReference type="Pfam" id="PF02729">
    <property type="entry name" value="OTCace_N"/>
    <property type="match status" value="1"/>
</dbReference>
<dbReference type="PRINTS" id="PR00100">
    <property type="entry name" value="AOTCASE"/>
</dbReference>
<dbReference type="PRINTS" id="PR00101">
    <property type="entry name" value="ATCASE"/>
</dbReference>
<dbReference type="SUPFAM" id="SSF53671">
    <property type="entry name" value="Aspartate/ornithine carbamoyltransferase"/>
    <property type="match status" value="1"/>
</dbReference>
<dbReference type="PROSITE" id="PS00097">
    <property type="entry name" value="CARBAMOYLTRANSFERASE"/>
    <property type="match status" value="1"/>
</dbReference>
<protein>
    <recommendedName>
        <fullName evidence="1">Aspartate carbamoyltransferase catalytic subunit</fullName>
        <ecNumber evidence="1">2.1.3.2</ecNumber>
    </recommendedName>
    <alternativeName>
        <fullName evidence="1">Aspartate transcarbamylase</fullName>
        <shortName evidence="1">ATCase</shortName>
    </alternativeName>
</protein>
<feature type="chain" id="PRO_0000321122" description="Aspartate carbamoyltransferase catalytic subunit">
    <location>
        <begin position="1"/>
        <end position="316"/>
    </location>
</feature>
<feature type="binding site" evidence="1">
    <location>
        <position position="56"/>
    </location>
    <ligand>
        <name>carbamoyl phosphate</name>
        <dbReference type="ChEBI" id="CHEBI:58228"/>
    </ligand>
</feature>
<feature type="binding site" evidence="1">
    <location>
        <position position="57"/>
    </location>
    <ligand>
        <name>carbamoyl phosphate</name>
        <dbReference type="ChEBI" id="CHEBI:58228"/>
    </ligand>
</feature>
<feature type="binding site" evidence="1">
    <location>
        <position position="84"/>
    </location>
    <ligand>
        <name>L-aspartate</name>
        <dbReference type="ChEBI" id="CHEBI:29991"/>
    </ligand>
</feature>
<feature type="binding site" evidence="1">
    <location>
        <position position="106"/>
    </location>
    <ligand>
        <name>carbamoyl phosphate</name>
        <dbReference type="ChEBI" id="CHEBI:58228"/>
    </ligand>
</feature>
<feature type="binding site" evidence="1">
    <location>
        <position position="139"/>
    </location>
    <ligand>
        <name>carbamoyl phosphate</name>
        <dbReference type="ChEBI" id="CHEBI:58228"/>
    </ligand>
</feature>
<feature type="binding site" evidence="1">
    <location>
        <position position="142"/>
    </location>
    <ligand>
        <name>carbamoyl phosphate</name>
        <dbReference type="ChEBI" id="CHEBI:58228"/>
    </ligand>
</feature>
<feature type="binding site" evidence="1">
    <location>
        <position position="172"/>
    </location>
    <ligand>
        <name>L-aspartate</name>
        <dbReference type="ChEBI" id="CHEBI:29991"/>
    </ligand>
</feature>
<feature type="binding site" evidence="1">
    <location>
        <position position="226"/>
    </location>
    <ligand>
        <name>L-aspartate</name>
        <dbReference type="ChEBI" id="CHEBI:29991"/>
    </ligand>
</feature>
<feature type="binding site" evidence="1">
    <location>
        <position position="267"/>
    </location>
    <ligand>
        <name>carbamoyl phosphate</name>
        <dbReference type="ChEBI" id="CHEBI:58228"/>
    </ligand>
</feature>
<feature type="binding site" evidence="1">
    <location>
        <position position="268"/>
    </location>
    <ligand>
        <name>carbamoyl phosphate</name>
        <dbReference type="ChEBI" id="CHEBI:58228"/>
    </ligand>
</feature>
<keyword id="KW-0665">Pyrimidine biosynthesis</keyword>
<keyword id="KW-0808">Transferase</keyword>
<proteinExistence type="inferred from homology"/>
<organism>
    <name type="scientific">Mycobacterium sp. (strain MCS)</name>
    <dbReference type="NCBI Taxonomy" id="164756"/>
    <lineage>
        <taxon>Bacteria</taxon>
        <taxon>Bacillati</taxon>
        <taxon>Actinomycetota</taxon>
        <taxon>Actinomycetes</taxon>
        <taxon>Mycobacteriales</taxon>
        <taxon>Mycobacteriaceae</taxon>
        <taxon>Mycobacterium</taxon>
    </lineage>
</organism>
<name>PYRB_MYCSS</name>
<accession>Q1B9G3</accession>
<comment type="function">
    <text evidence="1">Catalyzes the condensation of carbamoyl phosphate and aspartate to form carbamoyl aspartate and inorganic phosphate, the committed step in the de novo pyrimidine nucleotide biosynthesis pathway.</text>
</comment>
<comment type="catalytic activity">
    <reaction evidence="1">
        <text>carbamoyl phosphate + L-aspartate = N-carbamoyl-L-aspartate + phosphate + H(+)</text>
        <dbReference type="Rhea" id="RHEA:20013"/>
        <dbReference type="ChEBI" id="CHEBI:15378"/>
        <dbReference type="ChEBI" id="CHEBI:29991"/>
        <dbReference type="ChEBI" id="CHEBI:32814"/>
        <dbReference type="ChEBI" id="CHEBI:43474"/>
        <dbReference type="ChEBI" id="CHEBI:58228"/>
        <dbReference type="EC" id="2.1.3.2"/>
    </reaction>
</comment>
<comment type="pathway">
    <text evidence="1">Pyrimidine metabolism; UMP biosynthesis via de novo pathway; (S)-dihydroorotate from bicarbonate: step 2/3.</text>
</comment>
<comment type="subunit">
    <text evidence="1">Heterododecamer (2C3:3R2) of six catalytic PyrB chains organized as two trimers (C3), and six regulatory PyrI chains organized as three dimers (R2).</text>
</comment>
<comment type="similarity">
    <text evidence="1">Belongs to the aspartate/ornithine carbamoyltransferase superfamily. ATCase family.</text>
</comment>
<evidence type="ECO:0000255" key="1">
    <source>
        <dbReference type="HAMAP-Rule" id="MF_00001"/>
    </source>
</evidence>
<sequence>MTRHLLTAADLSRDEATAILDDADRFSQALIGREVKKLPTLRGRTVITMFYENSTRTRVSFEVAGKWMSADVINVSASGSSVAKGESLRDTALTLRAAGADALIIRHPASGAAQQLAEWTAAEAGAPSVINAGDGTHEHPTQALLDALTLRQRLGGIEGRRVVIVGDVLHSRVARSNVLLLHTLGAEVVLVAPPTLLPVGVRQWPVTVSHDLDAELPAADAVLMLRVQAERMNGGFFPSAREYSVRYGLSDKRQALLPDSAVVLHPGPMLRGMEISSSVADSSQSAVLQQVSNGVHVRMAVLFHLLVGAEQEAISA</sequence>
<gene>
    <name evidence="1" type="primary">pyrB</name>
    <name type="ordered locus">Mmcs_2363</name>
</gene>